<gene>
    <name type="primary">OR1E1</name>
</gene>
<keyword id="KW-1003">Cell membrane</keyword>
<keyword id="KW-1015">Disulfide bond</keyword>
<keyword id="KW-0297">G-protein coupled receptor</keyword>
<keyword id="KW-0325">Glycoprotein</keyword>
<keyword id="KW-0472">Membrane</keyword>
<keyword id="KW-0552">Olfaction</keyword>
<keyword id="KW-0675">Receptor</keyword>
<keyword id="KW-1185">Reference proteome</keyword>
<keyword id="KW-0716">Sensory transduction</keyword>
<keyword id="KW-0807">Transducer</keyword>
<keyword id="KW-0812">Transmembrane</keyword>
<keyword id="KW-1133">Transmembrane helix</keyword>
<evidence type="ECO:0000255" key="1"/>
<evidence type="ECO:0000255" key="2">
    <source>
        <dbReference type="PROSITE-ProRule" id="PRU00521"/>
    </source>
</evidence>
<evidence type="ECO:0000305" key="3"/>
<sequence length="314" mass="35121">MMGQNQTSISDFLLLGLPIQPEQQNLCYALFLAMYLTTLLGNLLIIVLIRLDSHLHTPMYLFLSNLSFSDLCFSSVTIPKLLQNMQNQDPSIPYADCLTQMYFFLLFGDLESFLLVAMAYDRYVAICFALHYTAIMSPMLCLSLVALSWVLTTFHAMLHTLLMARLCFCADNVIPHFFCDMSALLKLACSDTRVNEWVIFIMGGLIVVIPFLLILGSYARIVSSILKVPSSKGICKAFSTCGSHLSVVSLFYGTVIGLYLCPSANSSTLKETVMAMMYTVVTPMLNPFIYSLRNGDMKGALSRVIHQKKTFFSL</sequence>
<organism>
    <name type="scientific">Gorilla gorilla gorilla</name>
    <name type="common">Western lowland gorilla</name>
    <dbReference type="NCBI Taxonomy" id="9595"/>
    <lineage>
        <taxon>Eukaryota</taxon>
        <taxon>Metazoa</taxon>
        <taxon>Chordata</taxon>
        <taxon>Craniata</taxon>
        <taxon>Vertebrata</taxon>
        <taxon>Euteleostomi</taxon>
        <taxon>Mammalia</taxon>
        <taxon>Eutheria</taxon>
        <taxon>Euarchontoglires</taxon>
        <taxon>Primates</taxon>
        <taxon>Haplorrhini</taxon>
        <taxon>Catarrhini</taxon>
        <taxon>Hominidae</taxon>
        <taxon>Gorilla</taxon>
    </lineage>
</organism>
<dbReference type="EMBL" id="AF101749">
    <property type="protein sequence ID" value="AAF03330.1"/>
    <property type="molecule type" value="Genomic_DNA"/>
</dbReference>
<dbReference type="SMR" id="Q9TU94"/>
<dbReference type="FunCoup" id="Q9TU94">
    <property type="interactions" value="320"/>
</dbReference>
<dbReference type="STRING" id="9593.ENSGGOP00000049608"/>
<dbReference type="GlyCosmos" id="Q9TU94">
    <property type="glycosylation" value="1 site, No reported glycans"/>
</dbReference>
<dbReference type="eggNOG" id="ENOG502SI5J">
    <property type="taxonomic scope" value="Eukaryota"/>
</dbReference>
<dbReference type="InParanoid" id="Q9TU94"/>
<dbReference type="Proteomes" id="UP000001519">
    <property type="component" value="Unplaced"/>
</dbReference>
<dbReference type="GO" id="GO:0005886">
    <property type="term" value="C:plasma membrane"/>
    <property type="evidence" value="ECO:0000318"/>
    <property type="project" value="GO_Central"/>
</dbReference>
<dbReference type="GO" id="GO:0004930">
    <property type="term" value="F:G protein-coupled receptor activity"/>
    <property type="evidence" value="ECO:0007669"/>
    <property type="project" value="UniProtKB-KW"/>
</dbReference>
<dbReference type="GO" id="GO:0004984">
    <property type="term" value="F:olfactory receptor activity"/>
    <property type="evidence" value="ECO:0000318"/>
    <property type="project" value="GO_Central"/>
</dbReference>
<dbReference type="GO" id="GO:0007165">
    <property type="term" value="P:signal transduction"/>
    <property type="evidence" value="ECO:0000318"/>
    <property type="project" value="GO_Central"/>
</dbReference>
<dbReference type="CDD" id="cd15236">
    <property type="entry name" value="7tmA_OR1E-like"/>
    <property type="match status" value="1"/>
</dbReference>
<dbReference type="FunFam" id="1.20.1070.10:FF:000009">
    <property type="entry name" value="Olfactory receptor"/>
    <property type="match status" value="1"/>
</dbReference>
<dbReference type="Gene3D" id="1.20.1070.10">
    <property type="entry name" value="Rhodopsin 7-helix transmembrane proteins"/>
    <property type="match status" value="1"/>
</dbReference>
<dbReference type="InterPro" id="IPR000276">
    <property type="entry name" value="GPCR_Rhodpsn"/>
</dbReference>
<dbReference type="InterPro" id="IPR017452">
    <property type="entry name" value="GPCR_Rhodpsn_7TM"/>
</dbReference>
<dbReference type="InterPro" id="IPR000725">
    <property type="entry name" value="Olfact_rcpt"/>
</dbReference>
<dbReference type="PANTHER" id="PTHR48001">
    <property type="entry name" value="OLFACTORY RECEPTOR"/>
    <property type="match status" value="1"/>
</dbReference>
<dbReference type="Pfam" id="PF13853">
    <property type="entry name" value="7tm_4"/>
    <property type="match status" value="1"/>
</dbReference>
<dbReference type="PRINTS" id="PR00237">
    <property type="entry name" value="GPCRRHODOPSN"/>
</dbReference>
<dbReference type="PRINTS" id="PR00245">
    <property type="entry name" value="OLFACTORYR"/>
</dbReference>
<dbReference type="SUPFAM" id="SSF81321">
    <property type="entry name" value="Family A G protein-coupled receptor-like"/>
    <property type="match status" value="1"/>
</dbReference>
<dbReference type="PROSITE" id="PS00237">
    <property type="entry name" value="G_PROTEIN_RECEP_F1_1"/>
    <property type="match status" value="1"/>
</dbReference>
<dbReference type="PROSITE" id="PS50262">
    <property type="entry name" value="G_PROTEIN_RECEP_F1_2"/>
    <property type="match status" value="1"/>
</dbReference>
<accession>Q9TU94</accession>
<reference key="1">
    <citation type="journal article" date="1999" name="Genomics">
        <title>Primate evolution of an olfactory receptor cluster: diversification by gene conversion and recent emergence of pseudogenes.</title>
        <authorList>
            <person name="Sharon D."/>
            <person name="Glusman G."/>
            <person name="Pilpel Y."/>
            <person name="Khen M."/>
            <person name="Gruetzner F."/>
            <person name="Haaf T."/>
            <person name="Lancet D."/>
        </authorList>
    </citation>
    <scope>NUCLEOTIDE SEQUENCE [GENOMIC DNA]</scope>
</reference>
<name>OR1E1_GORGO</name>
<protein>
    <recommendedName>
        <fullName>Olfactory receptor 1E1</fullName>
    </recommendedName>
</protein>
<feature type="chain" id="PRO_0000150426" description="Olfactory receptor 1E1">
    <location>
        <begin position="1"/>
        <end position="314"/>
    </location>
</feature>
<feature type="topological domain" description="Extracellular" evidence="1">
    <location>
        <begin position="1"/>
        <end position="25"/>
    </location>
</feature>
<feature type="transmembrane region" description="Helical; Name=1" evidence="1">
    <location>
        <begin position="26"/>
        <end position="49"/>
    </location>
</feature>
<feature type="topological domain" description="Cytoplasmic" evidence="1">
    <location>
        <begin position="50"/>
        <end position="57"/>
    </location>
</feature>
<feature type="transmembrane region" description="Helical; Name=2" evidence="1">
    <location>
        <begin position="58"/>
        <end position="79"/>
    </location>
</feature>
<feature type="topological domain" description="Extracellular" evidence="1">
    <location>
        <begin position="80"/>
        <end position="100"/>
    </location>
</feature>
<feature type="transmembrane region" description="Helical; Name=3" evidence="1">
    <location>
        <begin position="101"/>
        <end position="120"/>
    </location>
</feature>
<feature type="topological domain" description="Cytoplasmic" evidence="1">
    <location>
        <begin position="121"/>
        <end position="139"/>
    </location>
</feature>
<feature type="transmembrane region" description="Helical; Name=4" evidence="1">
    <location>
        <begin position="140"/>
        <end position="158"/>
    </location>
</feature>
<feature type="topological domain" description="Extracellular" evidence="1">
    <location>
        <begin position="159"/>
        <end position="195"/>
    </location>
</feature>
<feature type="transmembrane region" description="Helical; Name=5" evidence="1">
    <location>
        <begin position="196"/>
        <end position="219"/>
    </location>
</feature>
<feature type="topological domain" description="Cytoplasmic" evidence="1">
    <location>
        <begin position="220"/>
        <end position="236"/>
    </location>
</feature>
<feature type="transmembrane region" description="Helical; Name=6" evidence="1">
    <location>
        <begin position="237"/>
        <end position="259"/>
    </location>
</feature>
<feature type="topological domain" description="Extracellular" evidence="1">
    <location>
        <begin position="260"/>
        <end position="272"/>
    </location>
</feature>
<feature type="transmembrane region" description="Helical; Name=7" evidence="1">
    <location>
        <begin position="273"/>
        <end position="292"/>
    </location>
</feature>
<feature type="topological domain" description="Cytoplasmic" evidence="1">
    <location>
        <begin position="293"/>
        <end position="314"/>
    </location>
</feature>
<feature type="glycosylation site" description="N-linked (GlcNAc...) asparagine" evidence="1">
    <location>
        <position position="5"/>
    </location>
</feature>
<feature type="disulfide bond" evidence="2">
    <location>
        <begin position="97"/>
        <end position="189"/>
    </location>
</feature>
<proteinExistence type="inferred from homology"/>
<comment type="function">
    <text evidence="3">Odorant receptor.</text>
</comment>
<comment type="subcellular location">
    <subcellularLocation>
        <location>Cell membrane</location>
        <topology>Multi-pass membrane protein</topology>
    </subcellularLocation>
</comment>
<comment type="similarity">
    <text evidence="2">Belongs to the G-protein coupled receptor 1 family.</text>
</comment>